<name>CCG1_RABIT</name>
<dbReference type="EMBL" id="M32231">
    <property type="protein sequence ID" value="AAA31181.1"/>
    <property type="molecule type" value="mRNA"/>
</dbReference>
<dbReference type="EMBL" id="X56031">
    <property type="protein sequence ID" value="CAA39505.1"/>
    <property type="molecule type" value="mRNA"/>
</dbReference>
<dbReference type="PIR" id="S10728">
    <property type="entry name" value="S10728"/>
</dbReference>
<dbReference type="RefSeq" id="NP_001075862.1">
    <property type="nucleotide sequence ID" value="NM_001082393.1"/>
</dbReference>
<dbReference type="RefSeq" id="XP_008269323.1">
    <property type="nucleotide sequence ID" value="XM_008271101.4"/>
</dbReference>
<dbReference type="PDB" id="3JBR">
    <property type="method" value="EM"/>
    <property type="resolution" value="4.20 A"/>
    <property type="chains" value="E=1-222"/>
</dbReference>
<dbReference type="PDB" id="5GJV">
    <property type="method" value="EM"/>
    <property type="resolution" value="3.60 A"/>
    <property type="chains" value="E=1-222"/>
</dbReference>
<dbReference type="PDB" id="5GJW">
    <property type="method" value="EM"/>
    <property type="resolution" value="3.90 A"/>
    <property type="chains" value="E=1-222"/>
</dbReference>
<dbReference type="PDB" id="6JP5">
    <property type="method" value="EM"/>
    <property type="resolution" value="2.90 A"/>
    <property type="chains" value="E=1-222"/>
</dbReference>
<dbReference type="PDB" id="6JP8">
    <property type="method" value="EM"/>
    <property type="resolution" value="2.70 A"/>
    <property type="chains" value="E=1-222"/>
</dbReference>
<dbReference type="PDB" id="6JPA">
    <property type="method" value="EM"/>
    <property type="resolution" value="2.60 A"/>
    <property type="chains" value="E=1-222"/>
</dbReference>
<dbReference type="PDB" id="6JPB">
    <property type="method" value="EM"/>
    <property type="resolution" value="2.90 A"/>
    <property type="chains" value="E=1-222"/>
</dbReference>
<dbReference type="PDB" id="7JPK">
    <property type="method" value="EM"/>
    <property type="resolution" value="3.00 A"/>
    <property type="chains" value="E=1-222"/>
</dbReference>
<dbReference type="PDB" id="7JPL">
    <property type="method" value="EM"/>
    <property type="resolution" value="3.40 A"/>
    <property type="chains" value="E=1-222"/>
</dbReference>
<dbReference type="PDB" id="7JPV">
    <property type="method" value="EM"/>
    <property type="resolution" value="3.40 A"/>
    <property type="chains" value="E=1-222"/>
</dbReference>
<dbReference type="PDB" id="7JPW">
    <property type="method" value="EM"/>
    <property type="resolution" value="3.20 A"/>
    <property type="chains" value="E=1-222"/>
</dbReference>
<dbReference type="PDB" id="7JPX">
    <property type="method" value="EM"/>
    <property type="resolution" value="2.90 A"/>
    <property type="chains" value="E=1-222"/>
</dbReference>
<dbReference type="PDB" id="8E56">
    <property type="method" value="EM"/>
    <property type="resolution" value="2.80 A"/>
    <property type="chains" value="E=1-222"/>
</dbReference>
<dbReference type="PDB" id="8E57">
    <property type="method" value="EM"/>
    <property type="resolution" value="2.80 A"/>
    <property type="chains" value="E=1-222"/>
</dbReference>
<dbReference type="PDB" id="8E58">
    <property type="method" value="EM"/>
    <property type="resolution" value="3.00 A"/>
    <property type="chains" value="E=1-222"/>
</dbReference>
<dbReference type="PDBsum" id="3JBR"/>
<dbReference type="PDBsum" id="5GJV"/>
<dbReference type="PDBsum" id="5GJW"/>
<dbReference type="PDBsum" id="6JP5"/>
<dbReference type="PDBsum" id="6JP8"/>
<dbReference type="PDBsum" id="6JPA"/>
<dbReference type="PDBsum" id="6JPB"/>
<dbReference type="PDBsum" id="7JPK"/>
<dbReference type="PDBsum" id="7JPL"/>
<dbReference type="PDBsum" id="7JPV"/>
<dbReference type="PDBsum" id="7JPW"/>
<dbReference type="PDBsum" id="7JPX"/>
<dbReference type="PDBsum" id="8E56"/>
<dbReference type="PDBsum" id="8E57"/>
<dbReference type="PDBsum" id="8E58"/>
<dbReference type="EMDB" id="EMD-22414"/>
<dbReference type="EMDB" id="EMD-22415"/>
<dbReference type="EMDB" id="EMD-22424"/>
<dbReference type="EMDB" id="EMD-22425"/>
<dbReference type="EMDB" id="EMD-22426"/>
<dbReference type="EMDB" id="EMD-27904"/>
<dbReference type="EMDB" id="EMD-27905"/>
<dbReference type="EMDB" id="EMD-27906"/>
<dbReference type="EMDB" id="EMD-6475"/>
<dbReference type="EMDB" id="EMD-6476"/>
<dbReference type="EMDB" id="EMD-9513"/>
<dbReference type="EMDB" id="EMD-9515"/>
<dbReference type="EMDB" id="EMD-9866"/>
<dbReference type="EMDB" id="EMD-9867"/>
<dbReference type="EMDB" id="EMD-9868"/>
<dbReference type="EMDB" id="EMD-9869"/>
<dbReference type="SMR" id="P19518"/>
<dbReference type="ComplexPortal" id="CPX-3189">
    <property type="entry name" value="Cav1.1 voltage-gated calcium channel complex, CACNA2D1-CACNB1-CACNG1 variant"/>
</dbReference>
<dbReference type="DIP" id="DIP-61881N"/>
<dbReference type="FunCoup" id="P19518">
    <property type="interactions" value="9"/>
</dbReference>
<dbReference type="IntAct" id="P19518">
    <property type="interactions" value="2"/>
</dbReference>
<dbReference type="GlyCosmos" id="P19518">
    <property type="glycosylation" value="2 sites, No reported glycans"/>
</dbReference>
<dbReference type="PaxDb" id="9986-ENSOCUP00000007638"/>
<dbReference type="Ensembl" id="ENSOCUT00000008846.2">
    <property type="protein sequence ID" value="ENSOCUP00000007638.2"/>
    <property type="gene ID" value="ENSOCUG00000008850.4"/>
</dbReference>
<dbReference type="GeneID" id="100009263"/>
<dbReference type="KEGG" id="ocu:100009263"/>
<dbReference type="CTD" id="786"/>
<dbReference type="eggNOG" id="ENOG502QT5N">
    <property type="taxonomic scope" value="Eukaryota"/>
</dbReference>
<dbReference type="GeneTree" id="ENSGT00390000007786"/>
<dbReference type="HOGENOM" id="CLU_093876_0_0_1"/>
<dbReference type="InParanoid" id="P19518"/>
<dbReference type="OMA" id="KRIVMTD"/>
<dbReference type="OrthoDB" id="9937541at2759"/>
<dbReference type="TreeFam" id="TF331651"/>
<dbReference type="Proteomes" id="UP000001811">
    <property type="component" value="Chromosome 19"/>
</dbReference>
<dbReference type="Bgee" id="ENSOCUG00000008850">
    <property type="expression patterns" value="Expressed in skeletal muscle tissue and 7 other cell types or tissues"/>
</dbReference>
<dbReference type="GO" id="GO:1990454">
    <property type="term" value="C:L-type voltage-gated calcium channel complex"/>
    <property type="evidence" value="ECO:0000314"/>
    <property type="project" value="UniProtKB"/>
</dbReference>
<dbReference type="GO" id="GO:0005886">
    <property type="term" value="C:plasma membrane"/>
    <property type="evidence" value="ECO:0000314"/>
    <property type="project" value="UniProtKB"/>
</dbReference>
<dbReference type="GO" id="GO:0042383">
    <property type="term" value="C:sarcolemma"/>
    <property type="evidence" value="ECO:0000314"/>
    <property type="project" value="UniProtKB"/>
</dbReference>
<dbReference type="GO" id="GO:0030315">
    <property type="term" value="C:T-tubule"/>
    <property type="evidence" value="ECO:0000314"/>
    <property type="project" value="UniProtKB"/>
</dbReference>
<dbReference type="GO" id="GO:0005246">
    <property type="term" value="F:calcium channel regulator activity"/>
    <property type="evidence" value="ECO:0000314"/>
    <property type="project" value="UniProtKB"/>
</dbReference>
<dbReference type="GO" id="GO:0005245">
    <property type="term" value="F:voltage-gated calcium channel activity"/>
    <property type="evidence" value="ECO:0007669"/>
    <property type="project" value="InterPro"/>
</dbReference>
<dbReference type="GO" id="GO:0070588">
    <property type="term" value="P:calcium ion transmembrane transport"/>
    <property type="evidence" value="ECO:0000303"/>
    <property type="project" value="ComplexPortal"/>
</dbReference>
<dbReference type="GO" id="GO:0045933">
    <property type="term" value="P:positive regulation of muscle contraction"/>
    <property type="evidence" value="ECO:0000303"/>
    <property type="project" value="ComplexPortal"/>
</dbReference>
<dbReference type="GO" id="GO:1902514">
    <property type="term" value="P:regulation of calcium ion transmembrane transport via high voltage-gated calcium channel"/>
    <property type="evidence" value="ECO:0000314"/>
    <property type="project" value="UniProtKB"/>
</dbReference>
<dbReference type="FunFam" id="1.20.140.150:FF:000031">
    <property type="entry name" value="Voltage-dependent calcium channel gamma-1 subunit"/>
    <property type="match status" value="1"/>
</dbReference>
<dbReference type="Gene3D" id="1.20.140.150">
    <property type="match status" value="1"/>
</dbReference>
<dbReference type="InterPro" id="IPR004031">
    <property type="entry name" value="PMP22/EMP/MP20/Claudin"/>
</dbReference>
<dbReference type="InterPro" id="IPR005421">
    <property type="entry name" value="VDCC_g1su"/>
</dbReference>
<dbReference type="InterPro" id="IPR008368">
    <property type="entry name" value="VDCC_gsu"/>
</dbReference>
<dbReference type="PANTHER" id="PTHR15025:SF1">
    <property type="entry name" value="VOLTAGE-DEPENDENT CALCIUM CHANNEL GAMMA-1 SUBUNIT"/>
    <property type="match status" value="1"/>
</dbReference>
<dbReference type="PANTHER" id="PTHR15025">
    <property type="entry name" value="VOLTAGE-DEPENDENT CALCIUM CHANNEL GAMMA-1 SUBUNIT-RELATED"/>
    <property type="match status" value="1"/>
</dbReference>
<dbReference type="Pfam" id="PF13903">
    <property type="entry name" value="Claudin_2"/>
    <property type="match status" value="1"/>
</dbReference>
<dbReference type="PRINTS" id="PR01792">
    <property type="entry name" value="VDCCGAMMA"/>
</dbReference>
<dbReference type="PRINTS" id="PR01601">
    <property type="entry name" value="VDCCGAMMA1"/>
</dbReference>
<gene>
    <name type="primary">CACNG1</name>
    <name type="synonym">CACNLG</name>
</gene>
<evidence type="ECO:0000255" key="1"/>
<evidence type="ECO:0000269" key="2">
    <source>
    </source>
</evidence>
<evidence type="ECO:0000269" key="3">
    <source>
    </source>
</evidence>
<evidence type="ECO:0000269" key="4">
    <source>
    </source>
</evidence>
<evidence type="ECO:0000269" key="5">
    <source>
    </source>
</evidence>
<evidence type="ECO:0000305" key="6"/>
<evidence type="ECO:0000305" key="7">
    <source>
    </source>
</evidence>
<evidence type="ECO:0007744" key="8">
    <source>
        <dbReference type="PDB" id="3JBR"/>
    </source>
</evidence>
<evidence type="ECO:0007744" key="9">
    <source>
        <dbReference type="PDB" id="5GJV"/>
    </source>
</evidence>
<evidence type="ECO:0007744" key="10">
    <source>
        <dbReference type="PDB" id="5GJW"/>
    </source>
</evidence>
<evidence type="ECO:0007829" key="11">
    <source>
        <dbReference type="PDB" id="6JPA"/>
    </source>
</evidence>
<evidence type="ECO:0007829" key="12">
    <source>
        <dbReference type="PDB" id="6JPB"/>
    </source>
</evidence>
<evidence type="ECO:0007829" key="13">
    <source>
        <dbReference type="PDB" id="8E56"/>
    </source>
</evidence>
<evidence type="ECO:0007829" key="14">
    <source>
        <dbReference type="PDB" id="8E57"/>
    </source>
</evidence>
<feature type="chain" id="PRO_0000164671" description="Voltage-dependent calcium channel gamma-1 subunit">
    <location>
        <begin position="1"/>
        <end position="222"/>
    </location>
</feature>
<feature type="topological domain" description="Cytoplasmic" evidence="4 5">
    <location>
        <begin position="1"/>
        <end position="10"/>
    </location>
</feature>
<feature type="transmembrane region" description="Helical" evidence="4 5">
    <location>
        <begin position="11"/>
        <end position="29"/>
    </location>
</feature>
<feature type="topological domain" description="Extracellular" evidence="4 5">
    <location>
        <begin position="30"/>
        <end position="108"/>
    </location>
</feature>
<feature type="transmembrane region" description="Helical" evidence="4 5">
    <location>
        <begin position="109"/>
        <end position="129"/>
    </location>
</feature>
<feature type="topological domain" description="Cytoplasmic" evidence="4 5">
    <location>
        <begin position="130"/>
        <end position="134"/>
    </location>
</feature>
<feature type="transmembrane region" description="Helical" evidence="4 5">
    <location>
        <begin position="135"/>
        <end position="155"/>
    </location>
</feature>
<feature type="topological domain" description="Extracellular" evidence="4 5">
    <location>
        <begin position="156"/>
        <end position="179"/>
    </location>
</feature>
<feature type="transmembrane region" description="Helical" evidence="4 5">
    <location>
        <begin position="180"/>
        <end position="204"/>
    </location>
</feature>
<feature type="topological domain" description="Cytoplasmic" evidence="4 5">
    <location>
        <begin position="205"/>
        <end position="222"/>
    </location>
</feature>
<feature type="glycosylation site" description="N-linked (GlcNAc...) asparagine" evidence="1">
    <location>
        <position position="43"/>
    </location>
</feature>
<feature type="glycosylation site" description="N-linked (GlcNAc...) asparagine" evidence="1">
    <location>
        <position position="79"/>
    </location>
</feature>
<feature type="disulfide bond" evidence="5 9 10">
    <location>
        <begin position="57"/>
        <end position="80"/>
    </location>
</feature>
<feature type="turn" evidence="11">
    <location>
        <begin position="2"/>
        <end position="4"/>
    </location>
</feature>
<feature type="helix" evidence="11">
    <location>
        <begin position="8"/>
        <end position="26"/>
    </location>
</feature>
<feature type="strand" evidence="13">
    <location>
        <begin position="32"/>
        <end position="36"/>
    </location>
</feature>
<feature type="strand" evidence="11">
    <location>
        <begin position="48"/>
        <end position="50"/>
    </location>
</feature>
<feature type="strand" evidence="11">
    <location>
        <begin position="56"/>
        <end position="59"/>
    </location>
</feature>
<feature type="strand" evidence="11">
    <location>
        <begin position="79"/>
        <end position="81"/>
    </location>
</feature>
<feature type="helix" evidence="11">
    <location>
        <begin position="105"/>
        <end position="127"/>
    </location>
</feature>
<feature type="helix" evidence="14">
    <location>
        <begin position="130"/>
        <end position="132"/>
    </location>
</feature>
<feature type="helix" evidence="13">
    <location>
        <begin position="134"/>
        <end position="136"/>
    </location>
</feature>
<feature type="helix" evidence="11">
    <location>
        <begin position="137"/>
        <end position="164"/>
    </location>
</feature>
<feature type="strand" evidence="13">
    <location>
        <begin position="175"/>
        <end position="177"/>
    </location>
</feature>
<feature type="strand" evidence="12">
    <location>
        <begin position="179"/>
        <end position="181"/>
    </location>
</feature>
<feature type="helix" evidence="11">
    <location>
        <begin position="182"/>
        <end position="201"/>
    </location>
</feature>
<feature type="strand" evidence="11">
    <location>
        <begin position="210"/>
        <end position="212"/>
    </location>
</feature>
<feature type="strand" evidence="13">
    <location>
        <begin position="215"/>
        <end position="217"/>
    </location>
</feature>
<sequence length="222" mass="25058">MSPTEAPKVRVTLFCILVGIVLAMTAVVSDHWAVLSPHMENHNTTCEAAHFGLWRICTKRIALGEDRSCGPITLPGEKNCSYFRHFNPGESSEIFEFTTQKEYSISAAAISVFSLGFLIMGTICALMAFRKKRDYLLRPASMFYVFAGLCLFVSLEVMRQSVKRMIDSEDTVWIEYYYSWSFACACAAFVLLFLGGISLLLFSLPRMPQNPWESCMDAEPEH</sequence>
<comment type="function">
    <text evidence="2">Regulatory subunit of the voltage-gated calcium channel that gives rise to L-type calcium currents in skeletal muscle. Regulates channel inactivation kinetics.</text>
</comment>
<comment type="subunit">
    <text evidence="2 3 4 5">Component of a calcium channel complex consisting of a pore-forming alpha subunit (CACNA1S) and the ancillary subunits CACNB1 or CACNB2, CACNG1 and CACNA2D1 (PubMed:12409298, PubMed:2158672, PubMed:26680202, PubMed:27580036). The channel complex contains alpha, beta, gamma and delta subunits in a 1:1:1:1 ratio, i.e. it contains either CACNB1 or CACNB2 (PubMed:26680202, PubMed:27580036).</text>
</comment>
<comment type="interaction">
    <interactant intactId="EBI-9683808">
        <id>P19518</id>
    </interactant>
    <interactant intactId="EBI-8613624">
        <id>P07293</id>
        <label>CACNA1S</label>
    </interactant>
    <organismsDiffer>false</organismsDiffer>
    <experiments>3</experiments>
</comment>
<comment type="subcellular location">
    <subcellularLocation>
        <location evidence="2 4 5 7">Cell membrane</location>
        <location evidence="2 4 5 7">Sarcolemma</location>
        <topology evidence="4 5">Multi-pass membrane protein</topology>
    </subcellularLocation>
</comment>
<comment type="tissue specificity">
    <text evidence="3 4 5">Skeletal muscle (at protein level).</text>
</comment>
<comment type="PTM">
    <text evidence="2">N-glycosylated.</text>
</comment>
<comment type="similarity">
    <text evidence="6">Belongs to the PMP-22/EMP/MP20 family. CACNG subfamily.</text>
</comment>
<organism>
    <name type="scientific">Oryctolagus cuniculus</name>
    <name type="common">Rabbit</name>
    <dbReference type="NCBI Taxonomy" id="9986"/>
    <lineage>
        <taxon>Eukaryota</taxon>
        <taxon>Metazoa</taxon>
        <taxon>Chordata</taxon>
        <taxon>Craniata</taxon>
        <taxon>Vertebrata</taxon>
        <taxon>Euteleostomi</taxon>
        <taxon>Mammalia</taxon>
        <taxon>Eutheria</taxon>
        <taxon>Euarchontoglires</taxon>
        <taxon>Glires</taxon>
        <taxon>Lagomorpha</taxon>
        <taxon>Leporidae</taxon>
        <taxon>Oryctolagus</taxon>
    </lineage>
</organism>
<keyword id="KW-0002">3D-structure</keyword>
<keyword id="KW-0106">Calcium</keyword>
<keyword id="KW-0107">Calcium channel</keyword>
<keyword id="KW-0109">Calcium transport</keyword>
<keyword id="KW-1003">Cell membrane</keyword>
<keyword id="KW-0903">Direct protein sequencing</keyword>
<keyword id="KW-1015">Disulfide bond</keyword>
<keyword id="KW-0325">Glycoprotein</keyword>
<keyword id="KW-0407">Ion channel</keyword>
<keyword id="KW-0406">Ion transport</keyword>
<keyword id="KW-0472">Membrane</keyword>
<keyword id="KW-1185">Reference proteome</keyword>
<keyword id="KW-0812">Transmembrane</keyword>
<keyword id="KW-1133">Transmembrane helix</keyword>
<keyword id="KW-0813">Transport</keyword>
<keyword id="KW-0851">Voltage-gated channel</keyword>
<accession>P19518</accession>
<reference key="1">
    <citation type="journal article" date="1990" name="Science">
        <title>Primary structure of the gamma subunit of the DHP-sensitive calcium channel from skeletal muscle.</title>
        <authorList>
            <person name="Jay S.D."/>
            <person name="Ellis S.B."/>
            <person name="McCue A.F."/>
            <person name="Williams M.E."/>
            <person name="Vedvick T.S."/>
            <person name="Harpold M.M."/>
            <person name="Campbell K.P."/>
        </authorList>
    </citation>
    <scope>NUCLEOTIDE SEQUENCE [MRNA]</scope>
    <scope>PROTEIN SEQUENCE OF 1-9</scope>
    <scope>SUBCELLULAR LOCATION</scope>
    <scope>SUBUNIT</scope>
    <scope>TISSUE SPECIFICITY</scope>
    <source>
        <tissue>Skeletal muscle</tissue>
    </source>
</reference>
<reference key="2">
    <citation type="journal article" date="1990" name="FEBS Lett.">
        <title>The cDNA and deduced amino acid sequence of the gamma subunit of the L-type calcium channel from rabbit skeletal muscle.</title>
        <authorList>
            <person name="Bosse E."/>
            <person name="Regulla S."/>
            <person name="Biel M."/>
            <person name="Ruth P."/>
            <person name="Meyer H.E."/>
            <person name="Flockerzi V."/>
            <person name="Hofmann F."/>
        </authorList>
    </citation>
    <scope>NUCLEOTIDE SEQUENCE [MRNA]</scope>
    <source>
        <tissue>Skeletal muscle</tissue>
    </source>
</reference>
<reference key="3">
    <citation type="journal article" date="2003" name="J. Biol. Chem.">
        <title>Gamma 1 subunit interactions within the skeletal muscle L-type voltage-gated calcium channels.</title>
        <authorList>
            <person name="Arikkath J."/>
            <person name="Chen C.C."/>
            <person name="Ahern C."/>
            <person name="Allamand V."/>
            <person name="Flanagan J.D."/>
            <person name="Coronado R."/>
            <person name="Gregg R.G."/>
            <person name="Campbell K.P."/>
        </authorList>
    </citation>
    <scope>FUNCTION</scope>
    <scope>SUBUNIT</scope>
    <scope>SUBCELLULAR LOCATION</scope>
    <scope>GLYCOSYLATION</scope>
</reference>
<reference evidence="8" key="4">
    <citation type="journal article" date="2015" name="Science">
        <title>Structure of the voltage-gated calcium channel Cav1.1 complex.</title>
        <authorList>
            <person name="Wu J."/>
            <person name="Yan Z."/>
            <person name="Li Z."/>
            <person name="Yan C."/>
            <person name="Lu S."/>
            <person name="Dong M."/>
            <person name="Yan N."/>
        </authorList>
    </citation>
    <scope>STRUCTURE BY ELECTRON MICROSCOPY (4.20 ANGSTROMS) IN COMPLEX WITH CACNA1S; CACNB2 AND CACNA2D1</scope>
    <scope>SUBUNIT</scope>
    <scope>SUBCELLULAR LOCATION</scope>
    <scope>TOPOLOGY</scope>
    <scope>TISSUE SPECIFICITY</scope>
    <scope>IDENTIFICATION BY MASS SPECTROMETRY</scope>
</reference>
<reference evidence="9 10" key="5">
    <citation type="journal article" date="2016" name="Nature">
        <title>Structure of the voltage-gated calcium channel Ca(v)1.1 at 3.6A resolution.</title>
        <authorList>
            <person name="Wu J."/>
            <person name="Yan Z."/>
            <person name="Li Z."/>
            <person name="Qian X."/>
            <person name="Lu S."/>
            <person name="Dong M."/>
            <person name="Zhou Q."/>
            <person name="Yan N."/>
        </authorList>
    </citation>
    <scope>STRUCTURE BY ELECTRON MICROSCOPY (3.60 ANGSTROMS) IN COMPLEX WITH CACNA1S; CACNB1 AND CACNA2D1</scope>
    <scope>SUBUNIT</scope>
    <scope>SUBCELLULAR LOCATION</scope>
    <scope>TISSUE SPECIFICITY</scope>
    <scope>TOPOLOGY</scope>
    <scope>IDENTIFICATION BY MASS SPECTROMETRY</scope>
    <scope>DISULFIDE BONDS</scope>
</reference>
<protein>
    <recommendedName>
        <fullName>Voltage-dependent calcium channel gamma-1 subunit</fullName>
    </recommendedName>
    <alternativeName>
        <fullName>Dihydropyridine-sensitive L-type, skeletal muscle calcium channel subunit gamma</fullName>
    </alternativeName>
</protein>
<proteinExistence type="evidence at protein level"/>